<accession>P26852</accession>
<feature type="chain" id="PRO_0000061161" description="Cytochrome b">
    <location>
        <begin position="1"/>
        <end position="404"/>
    </location>
</feature>
<feature type="transmembrane region" description="Helical" evidence="3">
    <location>
        <begin position="35"/>
        <end position="55"/>
    </location>
</feature>
<feature type="transmembrane region" description="Helical" evidence="3">
    <location>
        <begin position="79"/>
        <end position="101"/>
    </location>
</feature>
<feature type="transmembrane region" description="Helical" evidence="3">
    <location>
        <begin position="116"/>
        <end position="136"/>
    </location>
</feature>
<feature type="transmembrane region" description="Helical" evidence="3">
    <location>
        <begin position="182"/>
        <end position="202"/>
    </location>
</feature>
<feature type="transmembrane region" description="Helical" evidence="3">
    <location>
        <begin position="228"/>
        <end position="248"/>
    </location>
</feature>
<feature type="transmembrane region" description="Helical" evidence="3">
    <location>
        <begin position="292"/>
        <end position="312"/>
    </location>
</feature>
<feature type="transmembrane region" description="Helical" evidence="3">
    <location>
        <begin position="324"/>
        <end position="344"/>
    </location>
</feature>
<feature type="transmembrane region" description="Helical" evidence="3">
    <location>
        <begin position="351"/>
        <end position="370"/>
    </location>
</feature>
<feature type="binding site" description="axial binding residue" evidence="3">
    <location>
        <position position="85"/>
    </location>
    <ligand>
        <name>heme b</name>
        <dbReference type="ChEBI" id="CHEBI:60344"/>
        <label>b562</label>
    </ligand>
    <ligandPart>
        <name>Fe</name>
        <dbReference type="ChEBI" id="CHEBI:18248"/>
    </ligandPart>
</feature>
<feature type="binding site" description="axial binding residue" evidence="3">
    <location>
        <position position="99"/>
    </location>
    <ligand>
        <name>heme b</name>
        <dbReference type="ChEBI" id="CHEBI:60344"/>
        <label>b566</label>
    </ligand>
    <ligandPart>
        <name>Fe</name>
        <dbReference type="ChEBI" id="CHEBI:18248"/>
    </ligandPart>
</feature>
<feature type="binding site" description="axial binding residue" evidence="3">
    <location>
        <position position="186"/>
    </location>
    <ligand>
        <name>heme b</name>
        <dbReference type="ChEBI" id="CHEBI:60344"/>
        <label>b562</label>
    </ligand>
    <ligandPart>
        <name>Fe</name>
        <dbReference type="ChEBI" id="CHEBI:18248"/>
    </ligandPart>
</feature>
<feature type="binding site" description="axial binding residue" evidence="3">
    <location>
        <position position="200"/>
    </location>
    <ligand>
        <name>heme b</name>
        <dbReference type="ChEBI" id="CHEBI:60344"/>
        <label>b566</label>
    </ligand>
    <ligandPart>
        <name>Fe</name>
        <dbReference type="ChEBI" id="CHEBI:18248"/>
    </ligandPart>
</feature>
<feature type="binding site" evidence="2">
    <location>
        <position position="205"/>
    </location>
    <ligand>
        <name>a ubiquinone</name>
        <dbReference type="ChEBI" id="CHEBI:16389"/>
    </ligand>
</feature>
<gene>
    <name type="primary">MT-CYB</name>
    <name type="synonym">COB</name>
    <name type="synonym">CYTB</name>
    <name type="synonym">MTCYB</name>
</gene>
<name>CYB_MARPO</name>
<organism>
    <name type="scientific">Marchantia polymorpha</name>
    <name type="common">Common liverwort</name>
    <name type="synonym">Marchantia aquatica</name>
    <dbReference type="NCBI Taxonomy" id="3197"/>
    <lineage>
        <taxon>Eukaryota</taxon>
        <taxon>Viridiplantae</taxon>
        <taxon>Streptophyta</taxon>
        <taxon>Embryophyta</taxon>
        <taxon>Marchantiophyta</taxon>
        <taxon>Marchantiopsida</taxon>
        <taxon>Marchantiidae</taxon>
        <taxon>Marchantiales</taxon>
        <taxon>Marchantiaceae</taxon>
        <taxon>Marchantia</taxon>
    </lineage>
</organism>
<comment type="function">
    <text evidence="3">Component of the ubiquinol-cytochrome c reductase complex (complex III or cytochrome b-c1 complex) that is part of the mitochondrial respiratory chain. The b-c1 complex mediates electron transfer from ubiquinol to cytochrome c. Contributes to the generation of a proton gradient across the mitochondrial membrane that is then used for ATP synthesis.</text>
</comment>
<comment type="cofactor">
    <cofactor evidence="3">
        <name>heme b</name>
        <dbReference type="ChEBI" id="CHEBI:60344"/>
    </cofactor>
    <text evidence="3">Binds 2 heme b groups non-covalently.</text>
</comment>
<comment type="subunit">
    <text evidence="1">The main subunits of complex b-c1 are: cytochrome b, cytochrome c1 and the Rieske protein.</text>
</comment>
<comment type="subcellular location">
    <subcellularLocation>
        <location evidence="3">Mitochondrion inner membrane</location>
        <topology evidence="3">Multi-pass membrane protein</topology>
    </subcellularLocation>
</comment>
<comment type="miscellaneous">
    <text evidence="1">Heme 1 (or BL or b562) is low-potential and absorbs at about 562 nm, and heme 2 (or BH or b566) is high-potential and absorbs at about 566 nm.</text>
</comment>
<comment type="similarity">
    <text evidence="4 5">Belongs to the cytochrome b family.</text>
</comment>
<comment type="caution">
    <text evidence="3">The protein contains only eight transmembrane helices, not nine as predicted by bioinformatics tools.</text>
</comment>
<proteinExistence type="inferred from homology"/>
<evidence type="ECO:0000250" key="1"/>
<evidence type="ECO:0000250" key="2">
    <source>
        <dbReference type="UniProtKB" id="P00157"/>
    </source>
</evidence>
<evidence type="ECO:0000250" key="3">
    <source>
        <dbReference type="UniProtKB" id="P00163"/>
    </source>
</evidence>
<evidence type="ECO:0000255" key="4">
    <source>
        <dbReference type="PROSITE-ProRule" id="PRU00967"/>
    </source>
</evidence>
<evidence type="ECO:0000255" key="5">
    <source>
        <dbReference type="PROSITE-ProRule" id="PRU00968"/>
    </source>
</evidence>
<dbReference type="EMBL" id="M68929">
    <property type="protein sequence ID" value="AAC09441.1"/>
    <property type="molecule type" value="Genomic_DNA"/>
</dbReference>
<dbReference type="PIR" id="S25953">
    <property type="entry name" value="S25953"/>
</dbReference>
<dbReference type="RefSeq" id="NP_054443.1">
    <property type="nucleotide sequence ID" value="NC_001660.1"/>
</dbReference>
<dbReference type="SMR" id="P26852"/>
<dbReference type="GeneID" id="2702454"/>
<dbReference type="GO" id="GO:0005743">
    <property type="term" value="C:mitochondrial inner membrane"/>
    <property type="evidence" value="ECO:0007669"/>
    <property type="project" value="UniProtKB-SubCell"/>
</dbReference>
<dbReference type="GO" id="GO:0045275">
    <property type="term" value="C:respiratory chain complex III"/>
    <property type="evidence" value="ECO:0007669"/>
    <property type="project" value="InterPro"/>
</dbReference>
<dbReference type="GO" id="GO:0046872">
    <property type="term" value="F:metal ion binding"/>
    <property type="evidence" value="ECO:0007669"/>
    <property type="project" value="UniProtKB-KW"/>
</dbReference>
<dbReference type="GO" id="GO:0008121">
    <property type="term" value="F:ubiquinol-cytochrome-c reductase activity"/>
    <property type="evidence" value="ECO:0007669"/>
    <property type="project" value="InterPro"/>
</dbReference>
<dbReference type="GO" id="GO:0022904">
    <property type="term" value="P:respiratory electron transport chain"/>
    <property type="evidence" value="ECO:0007669"/>
    <property type="project" value="InterPro"/>
</dbReference>
<dbReference type="CDD" id="cd00290">
    <property type="entry name" value="cytochrome_b_C"/>
    <property type="match status" value="1"/>
</dbReference>
<dbReference type="CDD" id="cd00284">
    <property type="entry name" value="Cytochrome_b_N"/>
    <property type="match status" value="1"/>
</dbReference>
<dbReference type="FunFam" id="1.20.810.10:FF:000006">
    <property type="entry name" value="Cytochrome b"/>
    <property type="match status" value="1"/>
</dbReference>
<dbReference type="Gene3D" id="1.20.810.10">
    <property type="entry name" value="Cytochrome Bc1 Complex, Chain C"/>
    <property type="match status" value="1"/>
</dbReference>
<dbReference type="InterPro" id="IPR005798">
    <property type="entry name" value="Cyt_b/b6_C"/>
</dbReference>
<dbReference type="InterPro" id="IPR036150">
    <property type="entry name" value="Cyt_b/b6_C_sf"/>
</dbReference>
<dbReference type="InterPro" id="IPR005797">
    <property type="entry name" value="Cyt_b/b6_N"/>
</dbReference>
<dbReference type="InterPro" id="IPR027387">
    <property type="entry name" value="Cytb/b6-like_sf"/>
</dbReference>
<dbReference type="InterPro" id="IPR030689">
    <property type="entry name" value="Cytochrome_b"/>
</dbReference>
<dbReference type="InterPro" id="IPR048260">
    <property type="entry name" value="Cytochrome_b_C_euk/bac"/>
</dbReference>
<dbReference type="InterPro" id="IPR048259">
    <property type="entry name" value="Cytochrome_b_N_euk/bac"/>
</dbReference>
<dbReference type="InterPro" id="IPR016174">
    <property type="entry name" value="Di-haem_cyt_TM"/>
</dbReference>
<dbReference type="PANTHER" id="PTHR19271">
    <property type="entry name" value="CYTOCHROME B"/>
    <property type="match status" value="1"/>
</dbReference>
<dbReference type="PANTHER" id="PTHR19271:SF16">
    <property type="entry name" value="CYTOCHROME B"/>
    <property type="match status" value="1"/>
</dbReference>
<dbReference type="Pfam" id="PF00032">
    <property type="entry name" value="Cytochrom_B_C"/>
    <property type="match status" value="1"/>
</dbReference>
<dbReference type="Pfam" id="PF00033">
    <property type="entry name" value="Cytochrome_B"/>
    <property type="match status" value="1"/>
</dbReference>
<dbReference type="PIRSF" id="PIRSF038885">
    <property type="entry name" value="COB"/>
    <property type="match status" value="1"/>
</dbReference>
<dbReference type="SUPFAM" id="SSF81648">
    <property type="entry name" value="a domain/subunit of cytochrome bc1 complex (Ubiquinol-cytochrome c reductase)"/>
    <property type="match status" value="1"/>
</dbReference>
<dbReference type="SUPFAM" id="SSF81342">
    <property type="entry name" value="Transmembrane di-heme cytochromes"/>
    <property type="match status" value="1"/>
</dbReference>
<dbReference type="PROSITE" id="PS51003">
    <property type="entry name" value="CYTB_CTER"/>
    <property type="match status" value="1"/>
</dbReference>
<dbReference type="PROSITE" id="PS51002">
    <property type="entry name" value="CYTB_NTER"/>
    <property type="match status" value="1"/>
</dbReference>
<keyword id="KW-0249">Electron transport</keyword>
<keyword id="KW-0349">Heme</keyword>
<keyword id="KW-0408">Iron</keyword>
<keyword id="KW-0472">Membrane</keyword>
<keyword id="KW-0479">Metal-binding</keyword>
<keyword id="KW-0496">Mitochondrion</keyword>
<keyword id="KW-0999">Mitochondrion inner membrane</keyword>
<keyword id="KW-0679">Respiratory chain</keyword>
<keyword id="KW-0812">Transmembrane</keyword>
<keyword id="KW-1133">Transmembrane helix</keyword>
<keyword id="KW-0813">Transport</keyword>
<keyword id="KW-0830">Ubiquinone</keyword>
<sequence>MARRLSILKQPIFSTFNNHLIDYPTPSNISYWWGFGSLAGLCLVIQILTGVFLAMHYTPHVDLAFLSVEHIMRDVKGGWLLRYMHANGASMFFIVVYLHFFRGLYYGSYASPRELVWCLGVVILLLMIVTAFIGYVLPWGQMSFWGATVITSLASAIPVVGDTIVTWLWGGFSVDNATLNRFFSLHYLLPFIIAGASILHLAALHQYGSNNPLGINSSVDKIAFYPYIYVKDLVGWVAFAIFFSIFVFYAPNVLGHPDNYIPANPMSTPAHIVPEWYFLPVYAILRSIPNKLGGVAAIGLVFVSLLALPFINTSYVRSSSFRPIHQKFFWLLVADCLLLGWIGCQPVEAPYVTIGQIASVGFFFYFAITPILGKCEARLIKNSNACEARSVLASFLTSIGLLWW</sequence>
<reference key="1">
    <citation type="journal article" date="1992" name="J. Mol. Biol.">
        <title>Gene organization deduced from the complete sequence of liverwort Marchantia polymorpha mitochondrial DNA. A primitive form of plant mitochondrial genome.</title>
        <authorList>
            <person name="Oda K."/>
            <person name="Yamato K."/>
            <person name="Ohta E."/>
            <person name="Nakamura Y."/>
            <person name="Takemura M."/>
            <person name="Nozato N."/>
            <person name="Akashi K."/>
            <person name="Kanegae T."/>
            <person name="Ogura Y."/>
            <person name="Kohchi T."/>
            <person name="Ohyama K."/>
        </authorList>
    </citation>
    <scope>NUCLEOTIDE SEQUENCE [GENOMIC DNA]</scope>
</reference>
<protein>
    <recommendedName>
        <fullName>Cytochrome b</fullName>
    </recommendedName>
    <alternativeName>
        <fullName>Complex III subunit 3</fullName>
    </alternativeName>
    <alternativeName>
        <fullName>Complex III subunit III</fullName>
    </alternativeName>
    <alternativeName>
        <fullName>Cytochrome b-c1 complex subunit 3</fullName>
    </alternativeName>
    <alternativeName>
        <fullName>Ubiquinol-cytochrome-c reductase complex cytochrome b subunit</fullName>
    </alternativeName>
</protein>
<geneLocation type="mitochondrion"/>